<proteinExistence type="evidence at transcript level"/>
<keyword id="KW-0010">Activator</keyword>
<keyword id="KW-0963">Cytoplasm</keyword>
<keyword id="KW-0238">DNA-binding</keyword>
<keyword id="KW-0379">Hydroxylation</keyword>
<keyword id="KW-0539">Nucleus</keyword>
<keyword id="KW-1185">Reference proteome</keyword>
<keyword id="KW-0677">Repeat</keyword>
<keyword id="KW-0804">Transcription</keyword>
<keyword id="KW-0805">Transcription regulation</keyword>
<keyword id="KW-0832">Ubl conjugation</keyword>
<protein>
    <recommendedName>
        <fullName>Hypoxia-inducible factor 1-alpha</fullName>
        <shortName>HIF-1-alpha</shortName>
        <shortName>HIF1-alpha</shortName>
    </recommendedName>
</protein>
<comment type="function">
    <text evidence="1">Functions as a master transcriptional regulator of the adaptive response to hypoxia. Under hypoxic conditions, activates the transcription of over 40 genes, including erythropoietin, glucose transporters, glycolytic enzymes, vascular endothelial growth factor, HILPDA, and other genes whose protein products increase oxygen delivery or facilitate metabolic adaptation to hypoxia. Plays an essential role in embryonic vascularization, tumor angiogenesis and pathophysiology of ischemic disease.</text>
</comment>
<comment type="activity regulation">
    <text evidence="1">Induced by reactive oxygen species (ROS).</text>
</comment>
<comment type="subunit">
    <text evidence="1">Efficient DNA binding requires heterodimerization of an alpha and a beta/ARNT subunit.</text>
</comment>
<comment type="subcellular location">
    <subcellularLocation>
        <location evidence="1">Cytoplasm</location>
    </subcellularLocation>
    <subcellularLocation>
        <location evidence="1">Nucleus</location>
    </subcellularLocation>
    <subcellularLocation>
        <location evidence="2">Nucleus speckle</location>
    </subcellularLocation>
    <text evidence="1">Cytoplasmic in normoxia, nuclear translocation in response to hypoxia.</text>
</comment>
<comment type="domain">
    <text evidence="1">Contains two independent C-terminal transactivation domains, NTAD and CTAD, which function synergistically. Their transcriptional activity is repressed by an intervening inhibitory domain (ID) (By similarity).</text>
</comment>
<comment type="PTM">
    <text evidence="1">In normoxia, is hydroxylated on Pro-402 and Pro-562. The hydroxylated prolines promote interaction with VHL, initiating rapid ubiquitination and subsequent proteasomal degradation. Under hypoxia, proline hydroxylation is impaired and ubiquitination is attenuated, resulting in stabilization (By similarity).</text>
</comment>
<comment type="PTM">
    <text evidence="1">In normoxia, is hydroxylated on Asn-788, thus abrogating interaction with CREBBP and EP300 and preventing transcriptional activation.</text>
</comment>
<comment type="PTM">
    <text evidence="1">The iron and 2-oxoglutarate dependent 3-hydroxylation of asparagine is (S) stereospecific within HIF CTAD domains.</text>
</comment>
<accession>Q9YIB9</accession>
<gene>
    <name type="primary">HIF1A</name>
</gene>
<name>HIF1A_CHICK</name>
<reference key="1">
    <citation type="submission" date="1998-05" db="EMBL/GenBank/DDBJ databases">
        <title>Molecular cloning and expression of an avian cDNA for hypoxia-inducible factor-1 alpha in embryonic ventricular myocytes.</title>
        <authorList>
            <person name="Takahashi T."/>
        </authorList>
    </citation>
    <scope>NUCLEOTIDE SEQUENCE [MRNA]</scope>
    <source>
        <tissue>Heart</tissue>
    </source>
</reference>
<feature type="chain" id="PRO_0000127223" description="Hypoxia-inducible factor 1-alpha">
    <location>
        <begin position="1"/>
        <end position="811"/>
    </location>
</feature>
<feature type="domain" description="bHLH" evidence="5">
    <location>
        <begin position="17"/>
        <end position="70"/>
    </location>
</feature>
<feature type="domain" description="PAS 1" evidence="4">
    <location>
        <begin position="80"/>
        <end position="157"/>
    </location>
</feature>
<feature type="domain" description="PAS 2" evidence="4">
    <location>
        <begin position="228"/>
        <end position="298"/>
    </location>
</feature>
<feature type="domain" description="PAC">
    <location>
        <begin position="302"/>
        <end position="345"/>
    </location>
</feature>
<feature type="region of interest" description="Disordered" evidence="6">
    <location>
        <begin position="1"/>
        <end position="27"/>
    </location>
</feature>
<feature type="region of interest" description="ODD">
    <location>
        <begin position="401"/>
        <end position="587"/>
    </location>
</feature>
<feature type="region of interest" description="Disordered" evidence="6">
    <location>
        <begin position="490"/>
        <end position="518"/>
    </location>
</feature>
<feature type="region of interest" description="NTAD">
    <location>
        <begin position="529"/>
        <end position="573"/>
    </location>
</feature>
<feature type="region of interest" description="ID">
    <location>
        <begin position="576"/>
        <end position="785"/>
    </location>
</feature>
<feature type="region of interest" description="Disordered" evidence="6">
    <location>
        <begin position="634"/>
        <end position="655"/>
    </location>
</feature>
<feature type="region of interest" description="CTAD">
    <location>
        <begin position="771"/>
        <end position="811"/>
    </location>
</feature>
<feature type="short sequence motif" description="Nuclear localization signal" evidence="3">
    <location>
        <begin position="703"/>
        <end position="706"/>
    </location>
</feature>
<feature type="short sequence motif" description="Nuclear localization signal" evidence="3">
    <location>
        <begin position="718"/>
        <end position="721"/>
    </location>
</feature>
<feature type="compositionally biased region" description="Basic and acidic residues" evidence="6">
    <location>
        <begin position="8"/>
        <end position="27"/>
    </location>
</feature>
<feature type="compositionally biased region" description="Low complexity" evidence="6">
    <location>
        <begin position="496"/>
        <end position="514"/>
    </location>
</feature>
<feature type="compositionally biased region" description="Polar residues" evidence="6">
    <location>
        <begin position="634"/>
        <end position="652"/>
    </location>
</feature>
<feature type="modified residue" description="4-hydroxyproline" evidence="1">
    <location>
        <position position="402"/>
    </location>
</feature>
<feature type="modified residue" description="4-hydroxyproline" evidence="1">
    <location>
        <position position="562"/>
    </location>
</feature>
<feature type="modified residue" description="(3S)-3-hydroxyasparagine" evidence="1">
    <location>
        <position position="788"/>
    </location>
</feature>
<organism>
    <name type="scientific">Gallus gallus</name>
    <name type="common">Chicken</name>
    <dbReference type="NCBI Taxonomy" id="9031"/>
    <lineage>
        <taxon>Eukaryota</taxon>
        <taxon>Metazoa</taxon>
        <taxon>Chordata</taxon>
        <taxon>Craniata</taxon>
        <taxon>Vertebrata</taxon>
        <taxon>Euteleostomi</taxon>
        <taxon>Archelosauria</taxon>
        <taxon>Archosauria</taxon>
        <taxon>Dinosauria</taxon>
        <taxon>Saurischia</taxon>
        <taxon>Theropoda</taxon>
        <taxon>Coelurosauria</taxon>
        <taxon>Aves</taxon>
        <taxon>Neognathae</taxon>
        <taxon>Galloanserae</taxon>
        <taxon>Galliformes</taxon>
        <taxon>Phasianidae</taxon>
        <taxon>Phasianinae</taxon>
        <taxon>Gallus</taxon>
    </lineage>
</organism>
<evidence type="ECO:0000250" key="1">
    <source>
        <dbReference type="UniProtKB" id="Q16665"/>
    </source>
</evidence>
<evidence type="ECO:0000250" key="2">
    <source>
        <dbReference type="UniProtKB" id="Q61221"/>
    </source>
</evidence>
<evidence type="ECO:0000255" key="3"/>
<evidence type="ECO:0000255" key="4">
    <source>
        <dbReference type="PROSITE-ProRule" id="PRU00140"/>
    </source>
</evidence>
<evidence type="ECO:0000255" key="5">
    <source>
        <dbReference type="PROSITE-ProRule" id="PRU00981"/>
    </source>
</evidence>
<evidence type="ECO:0000256" key="6">
    <source>
        <dbReference type="SAM" id="MobiDB-lite"/>
    </source>
</evidence>
<dbReference type="EMBL" id="AB013746">
    <property type="protein sequence ID" value="BAA34234.2"/>
    <property type="molecule type" value="mRNA"/>
</dbReference>
<dbReference type="PIR" id="JC7619">
    <property type="entry name" value="JC7619"/>
</dbReference>
<dbReference type="RefSeq" id="NP_989628.1">
    <property type="nucleotide sequence ID" value="NM_204297.1"/>
</dbReference>
<dbReference type="SMR" id="Q9YIB9"/>
<dbReference type="FunCoup" id="Q9YIB9">
    <property type="interactions" value="1167"/>
</dbReference>
<dbReference type="STRING" id="9031.ENSGALP00000019338"/>
<dbReference type="PaxDb" id="9031-ENSGALP00000019338"/>
<dbReference type="GeneID" id="374177"/>
<dbReference type="KEGG" id="gga:374177"/>
<dbReference type="CTD" id="3091"/>
<dbReference type="VEuPathDB" id="HostDB:geneid_374177"/>
<dbReference type="eggNOG" id="KOG3558">
    <property type="taxonomic scope" value="Eukaryota"/>
</dbReference>
<dbReference type="InParanoid" id="Q9YIB9"/>
<dbReference type="OrthoDB" id="6021714at2759"/>
<dbReference type="PhylomeDB" id="Q9YIB9"/>
<dbReference type="PRO" id="PR:Q9YIB9"/>
<dbReference type="Proteomes" id="UP000000539">
    <property type="component" value="Unassembled WGS sequence"/>
</dbReference>
<dbReference type="GO" id="GO:0005737">
    <property type="term" value="C:cytoplasm"/>
    <property type="evidence" value="ECO:0007669"/>
    <property type="project" value="UniProtKB-SubCell"/>
</dbReference>
<dbReference type="GO" id="GO:0016607">
    <property type="term" value="C:nuclear speck"/>
    <property type="evidence" value="ECO:0000250"/>
    <property type="project" value="UniProtKB"/>
</dbReference>
<dbReference type="GO" id="GO:0005634">
    <property type="term" value="C:nucleus"/>
    <property type="evidence" value="ECO:0000250"/>
    <property type="project" value="UniProtKB"/>
</dbReference>
<dbReference type="GO" id="GO:0003700">
    <property type="term" value="F:DNA-binding transcription factor activity"/>
    <property type="evidence" value="ECO:0000250"/>
    <property type="project" value="UniProtKB"/>
</dbReference>
<dbReference type="GO" id="GO:0000981">
    <property type="term" value="F:DNA-binding transcription factor activity, RNA polymerase II-specific"/>
    <property type="evidence" value="ECO:0000318"/>
    <property type="project" value="GO_Central"/>
</dbReference>
<dbReference type="GO" id="GO:0046983">
    <property type="term" value="F:protein dimerization activity"/>
    <property type="evidence" value="ECO:0007669"/>
    <property type="project" value="InterPro"/>
</dbReference>
<dbReference type="GO" id="GO:0000977">
    <property type="term" value="F:RNA polymerase II transcription regulatory region sequence-specific DNA binding"/>
    <property type="evidence" value="ECO:0000318"/>
    <property type="project" value="GO_Central"/>
</dbReference>
<dbReference type="GO" id="GO:0001223">
    <property type="term" value="F:transcription coactivator binding"/>
    <property type="evidence" value="ECO:0000250"/>
    <property type="project" value="UniProtKB"/>
</dbReference>
<dbReference type="GO" id="GO:0071456">
    <property type="term" value="P:cellular response to hypoxia"/>
    <property type="evidence" value="ECO:0000318"/>
    <property type="project" value="GO_Central"/>
</dbReference>
<dbReference type="GO" id="GO:0001678">
    <property type="term" value="P:intracellular glucose homeostasis"/>
    <property type="evidence" value="ECO:0000250"/>
    <property type="project" value="UniProtKB"/>
</dbReference>
<dbReference type="GO" id="GO:0045893">
    <property type="term" value="P:positive regulation of DNA-templated transcription"/>
    <property type="evidence" value="ECO:0000250"/>
    <property type="project" value="UniProtKB"/>
</dbReference>
<dbReference type="GO" id="GO:0006357">
    <property type="term" value="P:regulation of transcription by RNA polymerase II"/>
    <property type="evidence" value="ECO:0000318"/>
    <property type="project" value="GO_Central"/>
</dbReference>
<dbReference type="GO" id="GO:0001666">
    <property type="term" value="P:response to hypoxia"/>
    <property type="evidence" value="ECO:0000250"/>
    <property type="project" value="UniProtKB"/>
</dbReference>
<dbReference type="CDD" id="cd19727">
    <property type="entry name" value="bHLH-PAS_HIF1a_PASD8"/>
    <property type="match status" value="1"/>
</dbReference>
<dbReference type="CDD" id="cd00130">
    <property type="entry name" value="PAS"/>
    <property type="match status" value="2"/>
</dbReference>
<dbReference type="FunFam" id="3.30.450.20:FF:000005">
    <property type="entry name" value="Hypoxia-inducible factor 1 subunit alpha"/>
    <property type="match status" value="1"/>
</dbReference>
<dbReference type="FunFam" id="3.30.450.20:FF:000015">
    <property type="entry name" value="Hypoxia-inducible factor 1-alpha isoform 1"/>
    <property type="match status" value="1"/>
</dbReference>
<dbReference type="FunFam" id="4.10.280.10:FF:000076">
    <property type="entry name" value="hypoxia-inducible factor 3-alpha isoform X1"/>
    <property type="match status" value="1"/>
</dbReference>
<dbReference type="Gene3D" id="4.10.280.10">
    <property type="entry name" value="Helix-loop-helix DNA-binding domain"/>
    <property type="match status" value="1"/>
</dbReference>
<dbReference type="Gene3D" id="3.30.450.20">
    <property type="entry name" value="PAS domain"/>
    <property type="match status" value="2"/>
</dbReference>
<dbReference type="InterPro" id="IPR011598">
    <property type="entry name" value="bHLH_dom"/>
</dbReference>
<dbReference type="InterPro" id="IPR001321">
    <property type="entry name" value="HIF-1_alpha"/>
</dbReference>
<dbReference type="InterPro" id="IPR014887">
    <property type="entry name" value="HIF-1_CTAD"/>
</dbReference>
<dbReference type="InterPro" id="IPR021537">
    <property type="entry name" value="HIF_alpha-like"/>
</dbReference>
<dbReference type="InterPro" id="IPR036638">
    <property type="entry name" value="HLH_DNA-bd_sf"/>
</dbReference>
<dbReference type="InterPro" id="IPR001610">
    <property type="entry name" value="PAC"/>
</dbReference>
<dbReference type="InterPro" id="IPR000014">
    <property type="entry name" value="PAS"/>
</dbReference>
<dbReference type="InterPro" id="IPR035965">
    <property type="entry name" value="PAS-like_dom_sf"/>
</dbReference>
<dbReference type="InterPro" id="IPR013767">
    <property type="entry name" value="PAS_fold"/>
</dbReference>
<dbReference type="InterPro" id="IPR013655">
    <property type="entry name" value="PAS_fold_3"/>
</dbReference>
<dbReference type="NCBIfam" id="TIGR00229">
    <property type="entry name" value="sensory_box"/>
    <property type="match status" value="2"/>
</dbReference>
<dbReference type="PANTHER" id="PTHR23043">
    <property type="entry name" value="HYPOXIA-INDUCIBLE FACTOR 1 ALPHA"/>
    <property type="match status" value="1"/>
</dbReference>
<dbReference type="PANTHER" id="PTHR23043:SF7">
    <property type="entry name" value="HYPOXIA-INDUCIBLE FACTOR 1-ALPHA"/>
    <property type="match status" value="1"/>
</dbReference>
<dbReference type="Pfam" id="PF23171">
    <property type="entry name" value="bHLH_HIF1A"/>
    <property type="match status" value="1"/>
</dbReference>
<dbReference type="Pfam" id="PF11413">
    <property type="entry name" value="HIF-1"/>
    <property type="match status" value="1"/>
</dbReference>
<dbReference type="Pfam" id="PF08778">
    <property type="entry name" value="HIF-1a_CTAD"/>
    <property type="match status" value="1"/>
</dbReference>
<dbReference type="Pfam" id="PF00989">
    <property type="entry name" value="PAS"/>
    <property type="match status" value="1"/>
</dbReference>
<dbReference type="Pfam" id="PF08447">
    <property type="entry name" value="PAS_3"/>
    <property type="match status" value="1"/>
</dbReference>
<dbReference type="PRINTS" id="PR01080">
    <property type="entry name" value="HYPOXIAIF1A"/>
</dbReference>
<dbReference type="SMART" id="SM00353">
    <property type="entry name" value="HLH"/>
    <property type="match status" value="1"/>
</dbReference>
<dbReference type="SMART" id="SM00086">
    <property type="entry name" value="PAC"/>
    <property type="match status" value="1"/>
</dbReference>
<dbReference type="SMART" id="SM00091">
    <property type="entry name" value="PAS"/>
    <property type="match status" value="2"/>
</dbReference>
<dbReference type="SUPFAM" id="SSF47459">
    <property type="entry name" value="HLH, helix-loop-helix DNA-binding domain"/>
    <property type="match status" value="1"/>
</dbReference>
<dbReference type="SUPFAM" id="SSF55785">
    <property type="entry name" value="PYP-like sensor domain (PAS domain)"/>
    <property type="match status" value="2"/>
</dbReference>
<dbReference type="PROSITE" id="PS50888">
    <property type="entry name" value="BHLH"/>
    <property type="match status" value="1"/>
</dbReference>
<dbReference type="PROSITE" id="PS50112">
    <property type="entry name" value="PAS"/>
    <property type="match status" value="2"/>
</dbReference>
<sequence length="811" mass="90542">MDSPGGVTDKKRISSERRKEKSRDAARCRRSKESEVFYELAHQLPLPHTVSAHLDKASIMRLTISYLRMRKLLDAGELETEANMEKELNCFYLKALDGFVMVLSEDGDMIYMSENVNKCMGLTQFDLTGHSVFDFTHPCDHEELREMLTHRNGPVKKGKEQNTERSFFLRMKCTLTSRGRTVNIKSATWKVLHCTGHIRVYDTCNNQTHCGYKKPPMTCLVLICEPIPHPSNIEVPLDSKTFLSRHSLDMKFSYCDERITELMGYEPEELLGRSIYEYYHALDSDHLTKTHHDMFTKGQVTTGQYRMLAKQGGYVWVETQATVIYNTKNSQPQCIVCVNYVLSGIVQKDLIFSLGQTECMLKPVESPEMKMTKIFSKDDWDDTNSLFEKLKQEPDALTVLAPAAGDTIISLDFSSNESDEQQCDEVPLYNDVMLPSSSEKLQNINIAMSPLPASETTKPLRSNADPALNREVVSKLEPNTETLELSFTMPQVQEQPTSPSDASTSQSSPEPSSPNDYCFDVDNDMANEFKLELVEKLFAIDTEAKNPFSTQETDLDLEMLAPYIPMDDDFQLRSFDQLSPLESSSSGSQNAATITILQQTQTPSTAADEIKPVAERVDDVKALIVPSSPVHVINDTSSAPASPYSGNRSRTASPIRAGKGTLEQTEKSCPGAPSLITVTLNKRSTAMDEELNPKMLALHNAQRKRKMEHDGSLFQAVGIGSLFQQTGDRGGNASLAWKRVKACKTNGHNGVEQKTIILLSTDIASKLLGQSMDESGLPQLTSYDCEVNAPIQGNRNLLQGEELLRALDQVN</sequence>